<dbReference type="EMBL" id="AK007611">
    <property type="protein sequence ID" value="BAB25134.1"/>
    <property type="molecule type" value="mRNA"/>
</dbReference>
<dbReference type="EMBL" id="AK007929">
    <property type="protein sequence ID" value="BAB25356.1"/>
    <property type="molecule type" value="mRNA"/>
</dbReference>
<dbReference type="EMBL" id="AK009541">
    <property type="protein sequence ID" value="BAB26348.1"/>
    <property type="molecule type" value="mRNA"/>
</dbReference>
<dbReference type="EMBL" id="BC027409">
    <property type="protein sequence ID" value="AAH27409.1"/>
    <property type="molecule type" value="mRNA"/>
</dbReference>
<dbReference type="CCDS" id="CCDS23170.1">
    <molecule id="Q9D8L0-1"/>
</dbReference>
<dbReference type="RefSeq" id="NP_080141.2">
    <molecule id="Q9D8L0-1"/>
    <property type="nucleotide sequence ID" value="NM_025865.3"/>
</dbReference>
<dbReference type="BioGRID" id="211832">
    <property type="interactions" value="1"/>
</dbReference>
<dbReference type="FunCoup" id="Q9D8L0">
    <property type="interactions" value="24"/>
</dbReference>
<dbReference type="STRING" id="10090.ENSMUSP00000034564"/>
<dbReference type="iPTMnet" id="Q9D8L0"/>
<dbReference type="PhosphoSitePlus" id="Q9D8L0"/>
<dbReference type="SwissPalm" id="Q9D8L0"/>
<dbReference type="PaxDb" id="10090-ENSMUSP00000034564"/>
<dbReference type="Antibodypedia" id="51501">
    <property type="antibodies" value="23 antibodies from 9 providers"/>
</dbReference>
<dbReference type="DNASU" id="66952"/>
<dbReference type="Ensembl" id="ENSMUST00000034564.4">
    <molecule id="Q9D8L0-1"/>
    <property type="protein sequence ID" value="ENSMUSP00000034564.3"/>
    <property type="gene ID" value="ENSMUSG00000032062.4"/>
</dbReference>
<dbReference type="Ensembl" id="ENSMUST00000239417.2">
    <molecule id="Q9D8L0-2"/>
    <property type="protein sequence ID" value="ENSMUSP00000159377.2"/>
    <property type="gene ID" value="ENSMUSG00000032062.4"/>
</dbReference>
<dbReference type="GeneID" id="66952"/>
<dbReference type="KEGG" id="mmu:66952"/>
<dbReference type="UCSC" id="uc009pki.1">
    <molecule id="Q9D8L0-2"/>
    <property type="organism name" value="mouse"/>
</dbReference>
<dbReference type="AGR" id="MGI:1914202"/>
<dbReference type="MGI" id="MGI:1914202">
    <property type="gene designation" value="2310030G06Rik"/>
</dbReference>
<dbReference type="VEuPathDB" id="HostDB:ENSMUSG00000032062"/>
<dbReference type="eggNOG" id="ENOG502S7WW">
    <property type="taxonomic scope" value="Eukaryota"/>
</dbReference>
<dbReference type="GeneTree" id="ENSGT00390000015195"/>
<dbReference type="HOGENOM" id="CLU_1980817_0_0_1"/>
<dbReference type="InParanoid" id="Q9D8L0"/>
<dbReference type="OMA" id="WKCPSPF"/>
<dbReference type="OrthoDB" id="8846498at2759"/>
<dbReference type="PhylomeDB" id="Q9D8L0"/>
<dbReference type="TreeFam" id="TF336887"/>
<dbReference type="BioGRID-ORCS" id="66952">
    <property type="hits" value="2 hits in 76 CRISPR screens"/>
</dbReference>
<dbReference type="PRO" id="PR:Q9D8L0"/>
<dbReference type="Proteomes" id="UP000000589">
    <property type="component" value="Chromosome 9"/>
</dbReference>
<dbReference type="RNAct" id="Q9D8L0">
    <property type="molecule type" value="protein"/>
</dbReference>
<dbReference type="Bgee" id="ENSMUSG00000032062">
    <property type="expression patterns" value="Expressed in ectoplacental cone and 190 other cell types or tissues"/>
</dbReference>
<dbReference type="InterPro" id="IPR028106">
    <property type="entry name" value="DUF4578"/>
</dbReference>
<dbReference type="PANTHER" id="PTHR37342:SF1">
    <property type="entry name" value="CHROMOSOME 11 OPEN READING FRAME 52"/>
    <property type="match status" value="1"/>
</dbReference>
<dbReference type="PANTHER" id="PTHR37342">
    <property type="entry name" value="HYPOTHETICAL PROTEIN LOC689959"/>
    <property type="match status" value="1"/>
</dbReference>
<dbReference type="Pfam" id="PF15147">
    <property type="entry name" value="DUF4578"/>
    <property type="match status" value="1"/>
</dbReference>
<accession>Q9D8L0</accession>
<accession>Q9CPS4</accession>
<protein>
    <recommendedName>
        <fullName>Uncharacterized protein C11orf52 homolog</fullName>
    </recommendedName>
</protein>
<reference key="1">
    <citation type="journal article" date="2005" name="Science">
        <title>The transcriptional landscape of the mammalian genome.</title>
        <authorList>
            <person name="Carninci P."/>
            <person name="Kasukawa T."/>
            <person name="Katayama S."/>
            <person name="Gough J."/>
            <person name="Frith M.C."/>
            <person name="Maeda N."/>
            <person name="Oyama R."/>
            <person name="Ravasi T."/>
            <person name="Lenhard B."/>
            <person name="Wells C."/>
            <person name="Kodzius R."/>
            <person name="Shimokawa K."/>
            <person name="Bajic V.B."/>
            <person name="Brenner S.E."/>
            <person name="Batalov S."/>
            <person name="Forrest A.R."/>
            <person name="Zavolan M."/>
            <person name="Davis M.J."/>
            <person name="Wilming L.G."/>
            <person name="Aidinis V."/>
            <person name="Allen J.E."/>
            <person name="Ambesi-Impiombato A."/>
            <person name="Apweiler R."/>
            <person name="Aturaliya R.N."/>
            <person name="Bailey T.L."/>
            <person name="Bansal M."/>
            <person name="Baxter L."/>
            <person name="Beisel K.W."/>
            <person name="Bersano T."/>
            <person name="Bono H."/>
            <person name="Chalk A.M."/>
            <person name="Chiu K.P."/>
            <person name="Choudhary V."/>
            <person name="Christoffels A."/>
            <person name="Clutterbuck D.R."/>
            <person name="Crowe M.L."/>
            <person name="Dalla E."/>
            <person name="Dalrymple B.P."/>
            <person name="de Bono B."/>
            <person name="Della Gatta G."/>
            <person name="di Bernardo D."/>
            <person name="Down T."/>
            <person name="Engstrom P."/>
            <person name="Fagiolini M."/>
            <person name="Faulkner G."/>
            <person name="Fletcher C.F."/>
            <person name="Fukushima T."/>
            <person name="Furuno M."/>
            <person name="Futaki S."/>
            <person name="Gariboldi M."/>
            <person name="Georgii-Hemming P."/>
            <person name="Gingeras T.R."/>
            <person name="Gojobori T."/>
            <person name="Green R.E."/>
            <person name="Gustincich S."/>
            <person name="Harbers M."/>
            <person name="Hayashi Y."/>
            <person name="Hensch T.K."/>
            <person name="Hirokawa N."/>
            <person name="Hill D."/>
            <person name="Huminiecki L."/>
            <person name="Iacono M."/>
            <person name="Ikeo K."/>
            <person name="Iwama A."/>
            <person name="Ishikawa T."/>
            <person name="Jakt M."/>
            <person name="Kanapin A."/>
            <person name="Katoh M."/>
            <person name="Kawasawa Y."/>
            <person name="Kelso J."/>
            <person name="Kitamura H."/>
            <person name="Kitano H."/>
            <person name="Kollias G."/>
            <person name="Krishnan S.P."/>
            <person name="Kruger A."/>
            <person name="Kummerfeld S.K."/>
            <person name="Kurochkin I.V."/>
            <person name="Lareau L.F."/>
            <person name="Lazarevic D."/>
            <person name="Lipovich L."/>
            <person name="Liu J."/>
            <person name="Liuni S."/>
            <person name="McWilliam S."/>
            <person name="Madan Babu M."/>
            <person name="Madera M."/>
            <person name="Marchionni L."/>
            <person name="Matsuda H."/>
            <person name="Matsuzawa S."/>
            <person name="Miki H."/>
            <person name="Mignone F."/>
            <person name="Miyake S."/>
            <person name="Morris K."/>
            <person name="Mottagui-Tabar S."/>
            <person name="Mulder N."/>
            <person name="Nakano N."/>
            <person name="Nakauchi H."/>
            <person name="Ng P."/>
            <person name="Nilsson R."/>
            <person name="Nishiguchi S."/>
            <person name="Nishikawa S."/>
            <person name="Nori F."/>
            <person name="Ohara O."/>
            <person name="Okazaki Y."/>
            <person name="Orlando V."/>
            <person name="Pang K.C."/>
            <person name="Pavan W.J."/>
            <person name="Pavesi G."/>
            <person name="Pesole G."/>
            <person name="Petrovsky N."/>
            <person name="Piazza S."/>
            <person name="Reed J."/>
            <person name="Reid J.F."/>
            <person name="Ring B.Z."/>
            <person name="Ringwald M."/>
            <person name="Rost B."/>
            <person name="Ruan Y."/>
            <person name="Salzberg S.L."/>
            <person name="Sandelin A."/>
            <person name="Schneider C."/>
            <person name="Schoenbach C."/>
            <person name="Sekiguchi K."/>
            <person name="Semple C.A."/>
            <person name="Seno S."/>
            <person name="Sessa L."/>
            <person name="Sheng Y."/>
            <person name="Shibata Y."/>
            <person name="Shimada H."/>
            <person name="Shimada K."/>
            <person name="Silva D."/>
            <person name="Sinclair B."/>
            <person name="Sperling S."/>
            <person name="Stupka E."/>
            <person name="Sugiura K."/>
            <person name="Sultana R."/>
            <person name="Takenaka Y."/>
            <person name="Taki K."/>
            <person name="Tammoja K."/>
            <person name="Tan S.L."/>
            <person name="Tang S."/>
            <person name="Taylor M.S."/>
            <person name="Tegner J."/>
            <person name="Teichmann S.A."/>
            <person name="Ueda H.R."/>
            <person name="van Nimwegen E."/>
            <person name="Verardo R."/>
            <person name="Wei C.L."/>
            <person name="Yagi K."/>
            <person name="Yamanishi H."/>
            <person name="Zabarovsky E."/>
            <person name="Zhu S."/>
            <person name="Zimmer A."/>
            <person name="Hide W."/>
            <person name="Bult C."/>
            <person name="Grimmond S.M."/>
            <person name="Teasdale R.D."/>
            <person name="Liu E.T."/>
            <person name="Brusic V."/>
            <person name="Quackenbush J."/>
            <person name="Wahlestedt C."/>
            <person name="Mattick J.S."/>
            <person name="Hume D.A."/>
            <person name="Kai C."/>
            <person name="Sasaki D."/>
            <person name="Tomaru Y."/>
            <person name="Fukuda S."/>
            <person name="Kanamori-Katayama M."/>
            <person name="Suzuki M."/>
            <person name="Aoki J."/>
            <person name="Arakawa T."/>
            <person name="Iida J."/>
            <person name="Imamura K."/>
            <person name="Itoh M."/>
            <person name="Kato T."/>
            <person name="Kawaji H."/>
            <person name="Kawagashira N."/>
            <person name="Kawashima T."/>
            <person name="Kojima M."/>
            <person name="Kondo S."/>
            <person name="Konno H."/>
            <person name="Nakano K."/>
            <person name="Ninomiya N."/>
            <person name="Nishio T."/>
            <person name="Okada M."/>
            <person name="Plessy C."/>
            <person name="Shibata K."/>
            <person name="Shiraki T."/>
            <person name="Suzuki S."/>
            <person name="Tagami M."/>
            <person name="Waki K."/>
            <person name="Watahiki A."/>
            <person name="Okamura-Oho Y."/>
            <person name="Suzuki H."/>
            <person name="Kawai J."/>
            <person name="Hayashizaki Y."/>
        </authorList>
    </citation>
    <scope>NUCLEOTIDE SEQUENCE [LARGE SCALE MRNA] (ISOFORMS 1 AND 2)</scope>
    <source>
        <strain>C57BL/6J</strain>
        <tissue>Pancreas</tissue>
        <tissue>Tongue</tissue>
    </source>
</reference>
<reference key="2">
    <citation type="journal article" date="2004" name="Genome Res.">
        <title>The status, quality, and expansion of the NIH full-length cDNA project: the Mammalian Gene Collection (MGC).</title>
        <authorList>
            <consortium name="The MGC Project Team"/>
        </authorList>
    </citation>
    <scope>NUCLEOTIDE SEQUENCE [LARGE SCALE MRNA] (ISOFORM 2)</scope>
    <source>
        <strain>C57BL/6J</strain>
        <strain>FVB/N</strain>
        <tissue>Mammary tumor</tissue>
    </source>
</reference>
<name>CK052_MOUSE</name>
<feature type="chain" id="PRO_0000263610" description="Uncharacterized protein C11orf52 homolog">
    <location>
        <begin position="1"/>
        <end position="127"/>
    </location>
</feature>
<feature type="region of interest" description="Disordered" evidence="2">
    <location>
        <begin position="51"/>
        <end position="75"/>
    </location>
</feature>
<feature type="modified residue" description="Phosphothreonine" evidence="1">
    <location>
        <position position="30"/>
    </location>
</feature>
<feature type="modified residue" description="Phosphoserine" evidence="1">
    <location>
        <position position="63"/>
    </location>
</feature>
<feature type="splice variant" id="VSP_021875" description="In isoform 2." evidence="3 4">
    <original>M</original>
    <variation>MSENQLGSLGDTTAM</variation>
    <location>
        <position position="1"/>
    </location>
</feature>
<evidence type="ECO:0000250" key="1">
    <source>
        <dbReference type="UniProtKB" id="Q96A22"/>
    </source>
</evidence>
<evidence type="ECO:0000256" key="2">
    <source>
        <dbReference type="SAM" id="MobiDB-lite"/>
    </source>
</evidence>
<evidence type="ECO:0000303" key="3">
    <source>
    </source>
</evidence>
<evidence type="ECO:0000303" key="4">
    <source>
    </source>
</evidence>
<organism>
    <name type="scientific">Mus musculus</name>
    <name type="common">Mouse</name>
    <dbReference type="NCBI Taxonomy" id="10090"/>
    <lineage>
        <taxon>Eukaryota</taxon>
        <taxon>Metazoa</taxon>
        <taxon>Chordata</taxon>
        <taxon>Craniata</taxon>
        <taxon>Vertebrata</taxon>
        <taxon>Euteleostomi</taxon>
        <taxon>Mammalia</taxon>
        <taxon>Eutheria</taxon>
        <taxon>Euarchontoglires</taxon>
        <taxon>Glires</taxon>
        <taxon>Rodentia</taxon>
        <taxon>Myomorpha</taxon>
        <taxon>Muroidea</taxon>
        <taxon>Muridae</taxon>
        <taxon>Murinae</taxon>
        <taxon>Mus</taxon>
        <taxon>Mus</taxon>
    </lineage>
</organism>
<comment type="alternative products">
    <event type="alternative splicing"/>
    <isoform>
        <id>Q9D8L0-1</id>
        <name>1</name>
        <sequence type="displayed"/>
    </isoform>
    <isoform>
        <id>Q9D8L0-2</id>
        <name>2</name>
        <sequence type="described" ref="VSP_021875"/>
    </isoform>
</comment>
<sequence>MGNRLCCGGTWSCPSTFQKKSKTGSHPRPTLSILKQQQLWQNGTKDYETTAPTYEQVLYPPASQKKTSNSTSEESDLHYADIHVLRQIRPHSLHTVKCLHSESATEYATLRFPQATPQYDSNNGTLV</sequence>
<keyword id="KW-0025">Alternative splicing</keyword>
<keyword id="KW-0597">Phosphoprotein</keyword>
<keyword id="KW-1185">Reference proteome</keyword>
<proteinExistence type="evidence at transcript level"/>